<sequence>MKIEMICTGEEVLSGQIVDTNAAWAANALMDHGIEMQQRITVGDRLDDLVEVFRQRSEHADVILVNGGLGPTSDDMSSEAMAIAKGEPLVECTLWRERIQEWFTRNGRHMPESNLKQAMLPASAIMVDNPVGTACGFRVKLNRAWLFFTPGVPFEFKKMVTEQFIPFVEQIADSHIEVEVQKLLTIGQGESALADKLEGMPLPDGMTLGYRSFMPYIEIKLFARGEAAIGELDRVKAEVLTRLGDAVVGHNVASLAQVIHNGLLASGKRLSIAESCTGGMIANNLVAFAGSSNYLDQGLVTYSNESKVRVLGVKPATLDDHGAVSIATVEEMAKGARGLLDSDYALATSGIAGPDGGSEAKPVGTVAIALATRQGVYSQMLKFPARSRELVRQLSTAVALDMLRRELQESPVLVDYSSYPRFAR</sequence>
<proteinExistence type="inferred from homology"/>
<reference key="1">
    <citation type="submission" date="2007-03" db="EMBL/GenBank/DDBJ databases">
        <title>Complete sequence of Shewanella loihica PV-4.</title>
        <authorList>
            <consortium name="US DOE Joint Genome Institute"/>
            <person name="Copeland A."/>
            <person name="Lucas S."/>
            <person name="Lapidus A."/>
            <person name="Barry K."/>
            <person name="Detter J.C."/>
            <person name="Glavina del Rio T."/>
            <person name="Hammon N."/>
            <person name="Israni S."/>
            <person name="Dalin E."/>
            <person name="Tice H."/>
            <person name="Pitluck S."/>
            <person name="Chain P."/>
            <person name="Malfatti S."/>
            <person name="Shin M."/>
            <person name="Vergez L."/>
            <person name="Schmutz J."/>
            <person name="Larimer F."/>
            <person name="Land M."/>
            <person name="Hauser L."/>
            <person name="Kyrpides N."/>
            <person name="Mikhailova N."/>
            <person name="Romine M.F."/>
            <person name="Serres G."/>
            <person name="Fredrickson J."/>
            <person name="Tiedje J."/>
            <person name="Richardson P."/>
        </authorList>
    </citation>
    <scope>NUCLEOTIDE SEQUENCE [LARGE SCALE GENOMIC DNA]</scope>
    <source>
        <strain>ATCC BAA-1088 / PV-4</strain>
    </source>
</reference>
<comment type="similarity">
    <text evidence="1">Belongs to the CinA family.</text>
</comment>
<organism>
    <name type="scientific">Shewanella loihica (strain ATCC BAA-1088 / PV-4)</name>
    <dbReference type="NCBI Taxonomy" id="323850"/>
    <lineage>
        <taxon>Bacteria</taxon>
        <taxon>Pseudomonadati</taxon>
        <taxon>Pseudomonadota</taxon>
        <taxon>Gammaproteobacteria</taxon>
        <taxon>Alteromonadales</taxon>
        <taxon>Shewanellaceae</taxon>
        <taxon>Shewanella</taxon>
    </lineage>
</organism>
<name>CINAL_SHELP</name>
<keyword id="KW-1185">Reference proteome</keyword>
<evidence type="ECO:0000255" key="1">
    <source>
        <dbReference type="HAMAP-Rule" id="MF_00226"/>
    </source>
</evidence>
<feature type="chain" id="PRO_1000071777" description="CinA-like protein">
    <location>
        <begin position="1"/>
        <end position="424"/>
    </location>
</feature>
<dbReference type="EMBL" id="CP000606">
    <property type="protein sequence ID" value="ABO22070.1"/>
    <property type="molecule type" value="Genomic_DNA"/>
</dbReference>
<dbReference type="RefSeq" id="WP_011864005.1">
    <property type="nucleotide sequence ID" value="NC_009092.1"/>
</dbReference>
<dbReference type="SMR" id="A3Q9C2"/>
<dbReference type="STRING" id="323850.Shew_0198"/>
<dbReference type="KEGG" id="slo:Shew_0198"/>
<dbReference type="eggNOG" id="COG1058">
    <property type="taxonomic scope" value="Bacteria"/>
</dbReference>
<dbReference type="eggNOG" id="COG1546">
    <property type="taxonomic scope" value="Bacteria"/>
</dbReference>
<dbReference type="HOGENOM" id="CLU_030805_9_3_6"/>
<dbReference type="OrthoDB" id="9801454at2"/>
<dbReference type="Proteomes" id="UP000001558">
    <property type="component" value="Chromosome"/>
</dbReference>
<dbReference type="CDD" id="cd00885">
    <property type="entry name" value="cinA"/>
    <property type="match status" value="1"/>
</dbReference>
<dbReference type="Gene3D" id="3.90.950.20">
    <property type="entry name" value="CinA-like"/>
    <property type="match status" value="1"/>
</dbReference>
<dbReference type="Gene3D" id="3.40.980.10">
    <property type="entry name" value="MoaB/Mog-like domain"/>
    <property type="match status" value="1"/>
</dbReference>
<dbReference type="HAMAP" id="MF_00226_B">
    <property type="entry name" value="CinA_B"/>
    <property type="match status" value="1"/>
</dbReference>
<dbReference type="InterPro" id="IPR050101">
    <property type="entry name" value="CinA"/>
</dbReference>
<dbReference type="InterPro" id="IPR036653">
    <property type="entry name" value="CinA-like_C"/>
</dbReference>
<dbReference type="InterPro" id="IPR008136">
    <property type="entry name" value="CinA_C"/>
</dbReference>
<dbReference type="InterPro" id="IPR008135">
    <property type="entry name" value="Competence-induced_CinA"/>
</dbReference>
<dbReference type="InterPro" id="IPR036425">
    <property type="entry name" value="MoaB/Mog-like_dom_sf"/>
</dbReference>
<dbReference type="InterPro" id="IPR001453">
    <property type="entry name" value="MoaB/Mog_dom"/>
</dbReference>
<dbReference type="NCBIfam" id="TIGR00200">
    <property type="entry name" value="cinA_nterm"/>
    <property type="match status" value="1"/>
</dbReference>
<dbReference type="NCBIfam" id="TIGR00177">
    <property type="entry name" value="molyb_syn"/>
    <property type="match status" value="1"/>
</dbReference>
<dbReference type="NCBIfam" id="TIGR00199">
    <property type="entry name" value="PncC_domain"/>
    <property type="match status" value="1"/>
</dbReference>
<dbReference type="PANTHER" id="PTHR13939">
    <property type="entry name" value="NICOTINAMIDE-NUCLEOTIDE AMIDOHYDROLASE PNCC"/>
    <property type="match status" value="1"/>
</dbReference>
<dbReference type="PANTHER" id="PTHR13939:SF0">
    <property type="entry name" value="NMN AMIDOHYDROLASE-LIKE PROTEIN YFAY"/>
    <property type="match status" value="1"/>
</dbReference>
<dbReference type="Pfam" id="PF02464">
    <property type="entry name" value="CinA"/>
    <property type="match status" value="1"/>
</dbReference>
<dbReference type="Pfam" id="PF00994">
    <property type="entry name" value="MoCF_biosynth"/>
    <property type="match status" value="1"/>
</dbReference>
<dbReference type="PIRSF" id="PIRSF006728">
    <property type="entry name" value="CinA"/>
    <property type="match status" value="1"/>
</dbReference>
<dbReference type="SMART" id="SM00852">
    <property type="entry name" value="MoCF_biosynth"/>
    <property type="match status" value="1"/>
</dbReference>
<dbReference type="SUPFAM" id="SSF142433">
    <property type="entry name" value="CinA-like"/>
    <property type="match status" value="1"/>
</dbReference>
<dbReference type="SUPFAM" id="SSF53218">
    <property type="entry name" value="Molybdenum cofactor biosynthesis proteins"/>
    <property type="match status" value="1"/>
</dbReference>
<gene>
    <name type="ordered locus">Shew_0198</name>
</gene>
<protein>
    <recommendedName>
        <fullName evidence="1">CinA-like protein</fullName>
    </recommendedName>
</protein>
<accession>A3Q9C2</accession>